<organism>
    <name type="scientific">Caenorhabditis elegans</name>
    <dbReference type="NCBI Taxonomy" id="6239"/>
    <lineage>
        <taxon>Eukaryota</taxon>
        <taxon>Metazoa</taxon>
        <taxon>Ecdysozoa</taxon>
        <taxon>Nematoda</taxon>
        <taxon>Chromadorea</taxon>
        <taxon>Rhabditida</taxon>
        <taxon>Rhabditina</taxon>
        <taxon>Rhabditomorpha</taxon>
        <taxon>Rhabditoidea</taxon>
        <taxon>Rhabditidae</taxon>
        <taxon>Peloderinae</taxon>
        <taxon>Caenorhabditis</taxon>
    </lineage>
</organism>
<gene>
    <name type="primary">sams-1</name>
    <name type="ORF">C49F5.1</name>
</gene>
<dbReference type="EC" id="2.5.1.6" evidence="3"/>
<dbReference type="EMBL" id="Z81485">
    <property type="protein sequence ID" value="CAB03975.1"/>
    <property type="molecule type" value="Genomic_DNA"/>
</dbReference>
<dbReference type="PIR" id="T20070">
    <property type="entry name" value="T20070"/>
</dbReference>
<dbReference type="RefSeq" id="NP_001366882.1">
    <property type="nucleotide sequence ID" value="NM_001381113.3"/>
</dbReference>
<dbReference type="RefSeq" id="NP_510002.1">
    <property type="nucleotide sequence ID" value="NM_077601.3"/>
</dbReference>
<dbReference type="SMR" id="O17680"/>
<dbReference type="BioGRID" id="46276">
    <property type="interactions" value="40"/>
</dbReference>
<dbReference type="FunCoup" id="O17680">
    <property type="interactions" value="2171"/>
</dbReference>
<dbReference type="IntAct" id="O17680">
    <property type="interactions" value="4"/>
</dbReference>
<dbReference type="MINT" id="O17680"/>
<dbReference type="STRING" id="6239.C49F5.1.2"/>
<dbReference type="PaxDb" id="6239-C49F5.1.1"/>
<dbReference type="PeptideAtlas" id="O17680"/>
<dbReference type="EnsemblMetazoa" id="C49F5.1.1">
    <property type="protein sequence ID" value="C49F5.1.1"/>
    <property type="gene ID" value="WBGene00008205"/>
</dbReference>
<dbReference type="EnsemblMetazoa" id="C49F5.1.2">
    <property type="protein sequence ID" value="C49F5.1.2"/>
    <property type="gene ID" value="WBGene00008205"/>
</dbReference>
<dbReference type="EnsemblMetazoa" id="C49F5.1.3">
    <property type="protein sequence ID" value="C49F5.1.3"/>
    <property type="gene ID" value="WBGene00008205"/>
</dbReference>
<dbReference type="GeneID" id="181370"/>
<dbReference type="UCSC" id="C49F5.1.1">
    <property type="organism name" value="c. elegans"/>
</dbReference>
<dbReference type="AGR" id="WB:WBGene00008205"/>
<dbReference type="WormBase" id="C49F5.1">
    <property type="protein sequence ID" value="CE08852"/>
    <property type="gene ID" value="WBGene00008205"/>
    <property type="gene designation" value="sams-1"/>
</dbReference>
<dbReference type="eggNOG" id="KOG1506">
    <property type="taxonomic scope" value="Eukaryota"/>
</dbReference>
<dbReference type="GeneTree" id="ENSGT00950000183185"/>
<dbReference type="HOGENOM" id="CLU_041802_1_1_1"/>
<dbReference type="InParanoid" id="O17680"/>
<dbReference type="OMA" id="CEYAFRH"/>
<dbReference type="OrthoDB" id="5852090at2759"/>
<dbReference type="PhylomeDB" id="O17680"/>
<dbReference type="UniPathway" id="UPA00315">
    <property type="reaction ID" value="UER00080"/>
</dbReference>
<dbReference type="PRO" id="PR:O17680"/>
<dbReference type="Proteomes" id="UP000001940">
    <property type="component" value="Chromosome X"/>
</dbReference>
<dbReference type="Bgee" id="WBGene00008205">
    <property type="expression patterns" value="Expressed in larva and 4 other cell types or tissues"/>
</dbReference>
<dbReference type="GO" id="GO:0005829">
    <property type="term" value="C:cytosol"/>
    <property type="evidence" value="ECO:0000250"/>
    <property type="project" value="WormBase"/>
</dbReference>
<dbReference type="GO" id="GO:0005524">
    <property type="term" value="F:ATP binding"/>
    <property type="evidence" value="ECO:0007669"/>
    <property type="project" value="UniProtKB-KW"/>
</dbReference>
<dbReference type="GO" id="GO:0046872">
    <property type="term" value="F:metal ion binding"/>
    <property type="evidence" value="ECO:0007669"/>
    <property type="project" value="UniProtKB-KW"/>
</dbReference>
<dbReference type="GO" id="GO:0004478">
    <property type="term" value="F:methionine adenosyltransferase activity"/>
    <property type="evidence" value="ECO:0000315"/>
    <property type="project" value="WormBase"/>
</dbReference>
<dbReference type="GO" id="GO:0010888">
    <property type="term" value="P:negative regulation of lipid storage"/>
    <property type="evidence" value="ECO:0000315"/>
    <property type="project" value="WormBase"/>
</dbReference>
<dbReference type="GO" id="GO:0006730">
    <property type="term" value="P:one-carbon metabolic process"/>
    <property type="evidence" value="ECO:0007669"/>
    <property type="project" value="UniProtKB-KW"/>
</dbReference>
<dbReference type="GO" id="GO:0006556">
    <property type="term" value="P:S-adenosylmethionine biosynthetic process"/>
    <property type="evidence" value="ECO:0000315"/>
    <property type="project" value="WormBase"/>
</dbReference>
<dbReference type="CDD" id="cd18079">
    <property type="entry name" value="S-AdoMet_synt"/>
    <property type="match status" value="1"/>
</dbReference>
<dbReference type="FunFam" id="3.30.300.10:FF:000001">
    <property type="entry name" value="S-adenosylmethionine synthase"/>
    <property type="match status" value="1"/>
</dbReference>
<dbReference type="FunFam" id="3.30.300.10:FF:000003">
    <property type="entry name" value="S-adenosylmethionine synthase"/>
    <property type="match status" value="1"/>
</dbReference>
<dbReference type="FunFam" id="3.30.300.10:FF:000004">
    <property type="entry name" value="S-adenosylmethionine synthase"/>
    <property type="match status" value="1"/>
</dbReference>
<dbReference type="Gene3D" id="3.30.300.10">
    <property type="match status" value="3"/>
</dbReference>
<dbReference type="HAMAP" id="MF_00086">
    <property type="entry name" value="S_AdoMet_synth1"/>
    <property type="match status" value="1"/>
</dbReference>
<dbReference type="InterPro" id="IPR022631">
    <property type="entry name" value="ADOMET_SYNTHASE_CS"/>
</dbReference>
<dbReference type="InterPro" id="IPR022630">
    <property type="entry name" value="S-AdoMet_synt_C"/>
</dbReference>
<dbReference type="InterPro" id="IPR022629">
    <property type="entry name" value="S-AdoMet_synt_central"/>
</dbReference>
<dbReference type="InterPro" id="IPR022628">
    <property type="entry name" value="S-AdoMet_synt_N"/>
</dbReference>
<dbReference type="InterPro" id="IPR002133">
    <property type="entry name" value="S-AdoMet_synthetase"/>
</dbReference>
<dbReference type="InterPro" id="IPR022636">
    <property type="entry name" value="S-AdoMet_synthetase_sfam"/>
</dbReference>
<dbReference type="NCBIfam" id="TIGR01034">
    <property type="entry name" value="metK"/>
    <property type="match status" value="1"/>
</dbReference>
<dbReference type="PANTHER" id="PTHR11964">
    <property type="entry name" value="S-ADENOSYLMETHIONINE SYNTHETASE"/>
    <property type="match status" value="1"/>
</dbReference>
<dbReference type="Pfam" id="PF02773">
    <property type="entry name" value="S-AdoMet_synt_C"/>
    <property type="match status" value="1"/>
</dbReference>
<dbReference type="Pfam" id="PF02772">
    <property type="entry name" value="S-AdoMet_synt_M"/>
    <property type="match status" value="1"/>
</dbReference>
<dbReference type="Pfam" id="PF00438">
    <property type="entry name" value="S-AdoMet_synt_N"/>
    <property type="match status" value="1"/>
</dbReference>
<dbReference type="PIRSF" id="PIRSF000497">
    <property type="entry name" value="MAT"/>
    <property type="match status" value="1"/>
</dbReference>
<dbReference type="SUPFAM" id="SSF55973">
    <property type="entry name" value="S-adenosylmethionine synthetase"/>
    <property type="match status" value="3"/>
</dbReference>
<dbReference type="PROSITE" id="PS00376">
    <property type="entry name" value="ADOMET_SYNTHASE_1"/>
    <property type="match status" value="1"/>
</dbReference>
<dbReference type="PROSITE" id="PS00377">
    <property type="entry name" value="ADOMET_SYNTHASE_2"/>
    <property type="match status" value="1"/>
</dbReference>
<reference key="1">
    <citation type="journal article" date="1998" name="Science">
        <title>Genome sequence of the nematode C. elegans: a platform for investigating biology.</title>
        <authorList>
            <consortium name="The C. elegans sequencing consortium"/>
        </authorList>
    </citation>
    <scope>NUCLEOTIDE SEQUENCE [LARGE SCALE GENOMIC DNA]</scope>
    <source>
        <strain>Bristol N2</strain>
    </source>
</reference>
<reference key="2">
    <citation type="journal article" date="2011" name="Cell">
        <title>A conserved SREBP-1/phosphatidylcholine feedback circuit regulates lipogenesis in metazoans.</title>
        <authorList>
            <person name="Walker A.K."/>
            <person name="Jacobs R.L."/>
            <person name="Watts J.L."/>
            <person name="Rottiers V."/>
            <person name="Jiang K."/>
            <person name="Finnegan D.M."/>
            <person name="Shioda T."/>
            <person name="Hansen M."/>
            <person name="Yang F."/>
            <person name="Niebergall L.J."/>
            <person name="Vance D.E."/>
            <person name="Tzoneva M."/>
            <person name="Hart A.C."/>
            <person name="Naeaer A.M."/>
        </authorList>
    </citation>
    <scope>FUNCTION</scope>
    <scope>DISRUPTION PHENOTYPE</scope>
</reference>
<evidence type="ECO:0000250" key="1">
    <source>
        <dbReference type="UniProtKB" id="P0A817"/>
    </source>
</evidence>
<evidence type="ECO:0000250" key="2">
    <source>
        <dbReference type="UniProtKB" id="P13444"/>
    </source>
</evidence>
<evidence type="ECO:0000250" key="3">
    <source>
        <dbReference type="UniProtKB" id="Q00266"/>
    </source>
</evidence>
<evidence type="ECO:0000269" key="4">
    <source>
    </source>
</evidence>
<evidence type="ECO:0000305" key="5"/>
<proteinExistence type="evidence at protein level"/>
<sequence>MSSKFLFTSESVSEGHPDKMCDQISDAVLDAHLKQDPNAKVACETVTKTGMVMLCGEITSKAVVDYQVLVRRVIEKIGFTDSSIGFDHKTCNVLVALEQQSPEIAAGVHVNKDGEDVGAGDQGIMFGYATDETEETMPLTLILSHKINAELHKLRRNGTLPWVRPDSKSQVTIEYESRHGATIPLRVHTVVVSTQHSPDVTLEKLRETILADVIKKVIPASLLDESTVFHINPCGTFIVGGPMGDAGVTGRKIIVDTYGGWGAHGGGAFSGKDPTKVDRSAAYAARWVATSLVKAGLAKRVLVQLSYAIGIAKPISVLVYAFGTSPLTDEELHQIVEDSFDLTPGKIIKELDLKRPIYEKTAENGHFGHSEFPWEQPKALKISPALLEKAKGNPIPATSAIAH</sequence>
<comment type="function">
    <text evidence="3 4">Catalyzes the formation of S-adenosylmethionine (SAM) from methionine and ATP (By similarity). The reaction comprises two steps that are both catalyzed by the same enzyme: formation of S-adenosylmethionine (AdoMet) and triphosphate, and subsequent hydrolysis of the triphosphate (By similarity). May be required for the majority of global SAM production under normal growth conditions (PubMed:22035958).</text>
</comment>
<comment type="catalytic activity">
    <reaction evidence="3">
        <text>L-methionine + ATP + H2O = S-adenosyl-L-methionine + phosphate + diphosphate</text>
        <dbReference type="Rhea" id="RHEA:21080"/>
        <dbReference type="ChEBI" id="CHEBI:15377"/>
        <dbReference type="ChEBI" id="CHEBI:30616"/>
        <dbReference type="ChEBI" id="CHEBI:33019"/>
        <dbReference type="ChEBI" id="CHEBI:43474"/>
        <dbReference type="ChEBI" id="CHEBI:57844"/>
        <dbReference type="ChEBI" id="CHEBI:59789"/>
        <dbReference type="EC" id="2.5.1.6"/>
    </reaction>
</comment>
<comment type="cofactor">
    <cofactor evidence="2">
        <name>Mg(2+)</name>
        <dbReference type="ChEBI" id="CHEBI:18420"/>
    </cofactor>
    <text evidence="2">Binds 2 magnesium ions per subunit. The magnesium ions interact primarily with the substrate.</text>
</comment>
<comment type="cofactor">
    <cofactor evidence="2">
        <name>K(+)</name>
        <dbReference type="ChEBI" id="CHEBI:29103"/>
    </cofactor>
    <text evidence="2">Binds 1 potassium ion per subunit. The potassium ion interacts primarily with the substrate.</text>
</comment>
<comment type="pathway">
    <text evidence="3">Amino-acid biosynthesis; S-adenosyl-L-methionine biosynthesis; S-adenosyl-L-methionine from L-methionine: step 1/1.</text>
</comment>
<comment type="interaction">
    <interactant intactId="EBI-2412749">
        <id>O17680</id>
    </interactant>
    <interactant intactId="EBI-2412743">
        <id>P50305</id>
        <label>sams-3</label>
    </interactant>
    <organismsDiffer>false</organismsDiffer>
    <experiments>4</experiments>
</comment>
<comment type="interaction">
    <interactant intactId="EBI-2412749">
        <id>O17680</id>
    </interactant>
    <interactant intactId="EBI-2412759">
        <id>P50306</id>
        <label>sams-4</label>
    </interactant>
    <organismsDiffer>false</organismsDiffer>
    <experiments>4</experiments>
</comment>
<comment type="disruption phenotype">
    <text evidence="4">RNAi-mediated knockdown causes an approximately 65% decrease in S-adenosylmethionine (SAM) levels, with similar decreases in S-adenosylhomocysteine (SAH), the product of SAM-dependent methyltransferase reactions (PubMed:22035958). Increased levels of lipids, including triacylglycerols (PubMed:22035958). Increased nuclear localization of transcription factor sbp-1 and increased expression of known target genes of sbp-1, such as the fatty-acid desaturases fat-5, fat-6 and fat-7 (PubMed:22035958).</text>
</comment>
<comment type="similarity">
    <text evidence="5">Belongs to the AdoMet synthase family.</text>
</comment>
<feature type="chain" id="PRO_0000174444" description="Probable S-adenosylmethionine synthase 1">
    <location>
        <begin position="1"/>
        <end position="403"/>
    </location>
</feature>
<feature type="binding site" evidence="2">
    <location>
        <position position="10"/>
    </location>
    <ligand>
        <name>Mg(2+)</name>
        <dbReference type="ChEBI" id="CHEBI:18420"/>
    </ligand>
</feature>
<feature type="binding site" description="in other chain" evidence="3">
    <location>
        <position position="16"/>
    </location>
    <ligand>
        <name>ATP</name>
        <dbReference type="ChEBI" id="CHEBI:30616"/>
        <note>ligand shared between two neighboring subunits</note>
    </ligand>
</feature>
<feature type="binding site" evidence="1">
    <location>
        <position position="44"/>
    </location>
    <ligand>
        <name>K(+)</name>
        <dbReference type="ChEBI" id="CHEBI:29103"/>
    </ligand>
</feature>
<feature type="binding site" description="in other chain" evidence="1">
    <location>
        <position position="57"/>
    </location>
    <ligand>
        <name>L-methionine</name>
        <dbReference type="ChEBI" id="CHEBI:57844"/>
        <note>ligand shared between two neighboring subunits</note>
    </ligand>
</feature>
<feature type="binding site" description="in other chain" evidence="1">
    <location>
        <position position="100"/>
    </location>
    <ligand>
        <name>L-methionine</name>
        <dbReference type="ChEBI" id="CHEBI:57844"/>
        <note>ligand shared between two neighboring subunits</note>
    </ligand>
</feature>
<feature type="binding site" description="in other chain" evidence="3">
    <location>
        <begin position="166"/>
        <end position="168"/>
    </location>
    <ligand>
        <name>ATP</name>
        <dbReference type="ChEBI" id="CHEBI:30616"/>
        <note>ligand shared between two neighboring subunits</note>
    </ligand>
</feature>
<feature type="binding site" description="in other chain" evidence="3">
    <location>
        <begin position="234"/>
        <end position="237"/>
    </location>
    <ligand>
        <name>ATP</name>
        <dbReference type="ChEBI" id="CHEBI:30616"/>
        <note>ligand shared between two neighboring subunits</note>
    </ligand>
</feature>
<feature type="binding site" description="in other chain" evidence="3">
    <location>
        <position position="245"/>
    </location>
    <ligand>
        <name>ATP</name>
        <dbReference type="ChEBI" id="CHEBI:30616"/>
        <note>ligand shared between two neighboring subunits</note>
    </ligand>
</feature>
<feature type="binding site" evidence="1">
    <location>
        <position position="245"/>
    </location>
    <ligand>
        <name>L-methionine</name>
        <dbReference type="ChEBI" id="CHEBI:57844"/>
        <note>ligand shared between two neighboring subunits</note>
    </ligand>
</feature>
<feature type="binding site" description="in other chain" evidence="1">
    <location>
        <begin position="251"/>
        <end position="252"/>
    </location>
    <ligand>
        <name>ATP</name>
        <dbReference type="ChEBI" id="CHEBI:30616"/>
        <note>ligand shared between two neighboring subunits</note>
    </ligand>
</feature>
<feature type="binding site" evidence="1">
    <location>
        <position position="268"/>
    </location>
    <ligand>
        <name>ATP</name>
        <dbReference type="ChEBI" id="CHEBI:30616"/>
        <note>ligand shared between two neighboring subunits</note>
    </ligand>
</feature>
<feature type="binding site" evidence="1">
    <location>
        <position position="272"/>
    </location>
    <ligand>
        <name>ATP</name>
        <dbReference type="ChEBI" id="CHEBI:30616"/>
        <note>ligand shared between two neighboring subunits</note>
    </ligand>
</feature>
<feature type="binding site" evidence="2">
    <location>
        <position position="276"/>
    </location>
    <ligand>
        <name>ATP</name>
        <dbReference type="ChEBI" id="CHEBI:30616"/>
        <note>ligand shared between two neighboring subunits</note>
    </ligand>
</feature>
<feature type="binding site" description="in other chain" evidence="1">
    <location>
        <position position="276"/>
    </location>
    <ligand>
        <name>L-methionine</name>
        <dbReference type="ChEBI" id="CHEBI:57844"/>
        <note>ligand shared between two neighboring subunits</note>
    </ligand>
</feature>
<keyword id="KW-0067">ATP-binding</keyword>
<keyword id="KW-0460">Magnesium</keyword>
<keyword id="KW-0479">Metal-binding</keyword>
<keyword id="KW-0547">Nucleotide-binding</keyword>
<keyword id="KW-0554">One-carbon metabolism</keyword>
<keyword id="KW-0630">Potassium</keyword>
<keyword id="KW-1185">Reference proteome</keyword>
<keyword id="KW-0808">Transferase</keyword>
<accession>O17680</accession>
<name>METK1_CAEEL</name>
<protein>
    <recommendedName>
        <fullName>Probable S-adenosylmethionine synthase 1</fullName>
        <shortName>AdoMet synthase 1</shortName>
        <ecNumber evidence="3">2.5.1.6</ecNumber>
    </recommendedName>
    <alternativeName>
        <fullName>Methionine adenosyltransferase 1</fullName>
        <shortName>MAT 1</shortName>
    </alternativeName>
</protein>